<evidence type="ECO:0000250" key="1"/>
<evidence type="ECO:0000255" key="2">
    <source>
        <dbReference type="PROSITE-ProRule" id="PRU01382"/>
    </source>
</evidence>
<evidence type="ECO:0000269" key="3">
    <source>
    </source>
</evidence>
<evidence type="ECO:0000269" key="4">
    <source>
    </source>
</evidence>
<evidence type="ECO:0000305" key="5"/>
<accession>Q7T6X9</accession>
<organism>
    <name type="scientific">Acanthamoeba polyphaga mimivirus</name>
    <name type="common">APMV</name>
    <dbReference type="NCBI Taxonomy" id="212035"/>
    <lineage>
        <taxon>Viruses</taxon>
        <taxon>Varidnaviria</taxon>
        <taxon>Bamfordvirae</taxon>
        <taxon>Nucleocytoviricota</taxon>
        <taxon>Megaviricetes</taxon>
        <taxon>Imitervirales</taxon>
        <taxon>Mimiviridae</taxon>
        <taxon>Megamimivirinae</taxon>
        <taxon>Mimivirus</taxon>
        <taxon>Mimivirus bradfordmassiliense</taxon>
    </lineage>
</organism>
<organismHost>
    <name type="scientific">Acanthamoeba polyphaga</name>
    <name type="common">Amoeba</name>
    <dbReference type="NCBI Taxonomy" id="5757"/>
</organismHost>
<keyword id="KW-0238">DNA-binding</keyword>
<keyword id="KW-0413">Isomerase</keyword>
<keyword id="KW-1185">Reference proteome</keyword>
<keyword id="KW-0799">Topoisomerase</keyword>
<keyword id="KW-0946">Virion</keyword>
<protein>
    <recommendedName>
        <fullName>DNA topoisomerase 1B</fullName>
        <shortName>TopIB</shortName>
        <ecNumber>5.6.2.1</ecNumber>
    </recommendedName>
    <alternativeName>
        <fullName>DNA topoisomerase type IB</fullName>
    </alternativeName>
</protein>
<dbReference type="EC" id="5.6.2.1"/>
<dbReference type="EMBL" id="AY653733">
    <property type="protein sequence ID" value="AAQ09581.2"/>
    <property type="molecule type" value="Genomic_DNA"/>
</dbReference>
<dbReference type="SMR" id="Q7T6X9"/>
<dbReference type="KEGG" id="vg:9924801"/>
<dbReference type="OrthoDB" id="5271at10239"/>
<dbReference type="Proteomes" id="UP000001134">
    <property type="component" value="Genome"/>
</dbReference>
<dbReference type="GO" id="GO:0044423">
    <property type="term" value="C:virion component"/>
    <property type="evidence" value="ECO:0007669"/>
    <property type="project" value="UniProtKB-KW"/>
</dbReference>
<dbReference type="GO" id="GO:0003677">
    <property type="term" value="F:DNA binding"/>
    <property type="evidence" value="ECO:0007669"/>
    <property type="project" value="UniProtKB-KW"/>
</dbReference>
<dbReference type="GO" id="GO:0003917">
    <property type="term" value="F:DNA topoisomerase type I (single strand cut, ATP-independent) activity"/>
    <property type="evidence" value="ECO:0007669"/>
    <property type="project" value="UniProtKB-EC"/>
</dbReference>
<dbReference type="GO" id="GO:0006265">
    <property type="term" value="P:DNA topological change"/>
    <property type="evidence" value="ECO:0007669"/>
    <property type="project" value="InterPro"/>
</dbReference>
<dbReference type="CDD" id="cd00659">
    <property type="entry name" value="Topo_IB_C"/>
    <property type="match status" value="1"/>
</dbReference>
<dbReference type="Gene3D" id="3.30.66.10">
    <property type="entry name" value="DNA topoisomerase I domain"/>
    <property type="match status" value="1"/>
</dbReference>
<dbReference type="Gene3D" id="3.90.15.10">
    <property type="entry name" value="Topoisomerase I, Chain A, domain 3"/>
    <property type="match status" value="1"/>
</dbReference>
<dbReference type="InterPro" id="IPR011010">
    <property type="entry name" value="DNA_brk_join_enz"/>
</dbReference>
<dbReference type="InterPro" id="IPR035447">
    <property type="entry name" value="DNA_topo_I_N_sf"/>
</dbReference>
<dbReference type="InterPro" id="IPR049331">
    <property type="entry name" value="Top1B_N_bact"/>
</dbReference>
<dbReference type="InterPro" id="IPR001631">
    <property type="entry name" value="TopoI"/>
</dbReference>
<dbReference type="InterPro" id="IPR014711">
    <property type="entry name" value="TopoI_cat_a-hlx-sub_euk"/>
</dbReference>
<dbReference type="InterPro" id="IPR013500">
    <property type="entry name" value="TopoI_cat_euk"/>
</dbReference>
<dbReference type="Pfam" id="PF21338">
    <property type="entry name" value="Top1B_N_bact"/>
    <property type="match status" value="1"/>
</dbReference>
<dbReference type="Pfam" id="PF01028">
    <property type="entry name" value="Topoisom_I"/>
    <property type="match status" value="1"/>
</dbReference>
<dbReference type="PRINTS" id="PR00416">
    <property type="entry name" value="EUTPISMRASEI"/>
</dbReference>
<dbReference type="SUPFAM" id="SSF56349">
    <property type="entry name" value="DNA breaking-rejoining enzymes"/>
    <property type="match status" value="1"/>
</dbReference>
<dbReference type="SUPFAM" id="SSF55869">
    <property type="entry name" value="DNA topoisomerase I domain"/>
    <property type="match status" value="1"/>
</dbReference>
<dbReference type="PROSITE" id="PS52038">
    <property type="entry name" value="TOPO_IB_2"/>
    <property type="match status" value="1"/>
</dbReference>
<gene>
    <name type="primary">TOP1E</name>
    <name type="ordered locus">MIMI_R194</name>
</gene>
<name>TOP1E_MIMIV</name>
<comment type="function">
    <text evidence="1">Releases the supercoiling and torsional tension of DNA introduced during the DNA replication and transcription by transiently cleaving and rejoining one strand of the DNA duplex. Introduces a single-strand break via transesterification at a target site in duplex DNA. The scissile phosphodiester is attacked by the catalytic tyrosine of the enzyme, resulting in the formation of a DNA-(3'-phosphotyrosyl)-enzyme intermediate and the expulsion of a 5'-OH DNA strand. The free DNA strand then undergoes passage around the unbroken strand thus removing DNA supercoils. Finally, in the religation step, the DNA 5'-OH attacks the covalent intermediate to expel the active-site tyrosine and restore the DNA phosphodiester backbone (By similarity). Cleaves DNA after CCCTT sequence.</text>
</comment>
<comment type="catalytic activity">
    <reaction>
        <text>ATP-independent breakage of single-stranded DNA, followed by passage and rejoining.</text>
        <dbReference type="EC" id="5.6.2.1"/>
    </reaction>
</comment>
<comment type="subunit">
    <text evidence="1">Monomer.</text>
</comment>
<comment type="subcellular location">
    <subcellularLocation>
        <location evidence="4">Virion</location>
    </subcellularLocation>
</comment>
<comment type="similarity">
    <text evidence="5">Belongs to the type IB topoisomerase family.</text>
</comment>
<sequence>MSYDEKHLMEGIYREKSGDKFIYYYFDNNEEVTTKDIERINKLRIPPAWTNVWVARDPNSPIQAIGTDSKGRKQYRYNEIHIQGAEKEKFKRLYDFIKSIPKLEKAMVRDNNFPFYNKNRVISLMLQMVRDYNMRVGKEVYARQNKSYGISSLRKKHVKISPGVITLNFKGKSGQRLNYTIRNDFYIDGIKMLMKLEGDRLFQYISTDEDGNEKIMRVNDRDLNKYIQENMGSEFTIKDFRTFGANLYFIQALLSETRKRTPKNRKTIKKNIANAFKSTARQLKHTGAVSKKSYVMNYTLELYQNNPEFFIEHKNDDPIDFLLRILKSYRKDVLGE</sequence>
<feature type="chain" id="PRO_0000145212" description="DNA topoisomerase 1B">
    <location>
        <begin position="1"/>
        <end position="336"/>
    </location>
</feature>
<feature type="domain" description="Topo IB-type catalytic" evidence="2">
    <location>
        <begin position="79"/>
        <end position="336"/>
    </location>
</feature>
<feature type="active site" description="O-(3'-phospho-DNA)-tyrosine intermediate" evidence="2">
    <location>
        <position position="294"/>
    </location>
</feature>
<feature type="mutagenesis site" description="Complete loss of supercoil relaxation activity in vitro." evidence="3">
    <original>R</original>
    <variation>A</variation>
    <location>
        <position position="135"/>
    </location>
</feature>
<feature type="mutagenesis site" description="Complete loss of supercoil relaxation activity in vitro." evidence="3">
    <original>R</original>
    <variation>A</variation>
    <location>
        <position position="241"/>
    </location>
</feature>
<feature type="mutagenesis site" description="Partial loss of supercoil relaxation activity in vitro." evidence="3">
    <original>H</original>
    <variation>A</variation>
    <location>
        <position position="285"/>
    </location>
</feature>
<feature type="mutagenesis site" description="Complete loss of supercoil relaxation activity in vitro." evidence="3">
    <original>Y</original>
    <variation>A</variation>
    <location>
        <position position="294"/>
    </location>
</feature>
<proteinExistence type="evidence at protein level"/>
<reference key="1">
    <citation type="journal article" date="2004" name="Science">
        <title>The 1.2-megabase genome sequence of Mimivirus.</title>
        <authorList>
            <person name="Raoult D."/>
            <person name="Audic S."/>
            <person name="Robert C."/>
            <person name="Abergel C."/>
            <person name="Renesto P."/>
            <person name="Ogata H."/>
            <person name="La Scola B."/>
            <person name="Susan M."/>
            <person name="Claverie J.-M."/>
        </authorList>
    </citation>
    <scope>NUCLEOTIDE SEQUENCE [LARGE SCALE GENOMIC DNA]</scope>
    <source>
        <strain>Rowbotham-Bradford</strain>
    </source>
</reference>
<reference key="2">
    <citation type="journal article" date="2006" name="J. Virol.">
        <title>Characterization of mimivirus DNA topoisomerase IB suggests horizontal gene transfer between eukaryal viruses and bacteria.</title>
        <authorList>
            <person name="Benarroch D."/>
            <person name="Claverie J.-M."/>
            <person name="Raoult D."/>
            <person name="Shuman S."/>
        </authorList>
    </citation>
    <scope>CHARACTERIZATION</scope>
    <scope>MUTAGENESIS OF ARG-135; ARG-241; HIS-285 AND TYR-294</scope>
    <source>
        <strain>Rowbotham-Bradford</strain>
    </source>
</reference>
<reference key="3">
    <citation type="journal article" date="2006" name="J. Virol.">
        <title>Mimivirus giant particles incorporate a large fraction of anonymous and unique gene products.</title>
        <authorList>
            <person name="Renesto P."/>
            <person name="Abergel C."/>
            <person name="Decloquement P."/>
            <person name="Moinier D."/>
            <person name="Azza S."/>
            <person name="Ogata H."/>
            <person name="Fourquet P."/>
            <person name="Gorvel J.-P."/>
            <person name="Claverie J.-M."/>
            <person name="Raoult D."/>
        </authorList>
    </citation>
    <scope>IDENTIFICATION BY MASS SPECTROMETRY [LARGE SCALE ANALYSIS]</scope>
    <scope>SUBCELLULAR LOCATION</scope>
</reference>